<dbReference type="EC" id="1.1.1.85" evidence="5 7 8"/>
<dbReference type="EMBL" id="AB007650">
    <property type="protein sequence ID" value="BAB08299.1"/>
    <property type="molecule type" value="Genomic_DNA"/>
</dbReference>
<dbReference type="EMBL" id="CP002688">
    <property type="protein sequence ID" value="AED91997.1"/>
    <property type="molecule type" value="Genomic_DNA"/>
</dbReference>
<dbReference type="EMBL" id="AY074587">
    <property type="protein sequence ID" value="AAL67125.1"/>
    <property type="molecule type" value="mRNA"/>
</dbReference>
<dbReference type="RefSeq" id="NP_196924.1">
    <molecule id="Q9FMT1-1"/>
    <property type="nucleotide sequence ID" value="NM_121424.6"/>
</dbReference>
<dbReference type="SMR" id="Q9FMT1"/>
<dbReference type="BioGRID" id="16547">
    <property type="interactions" value="22"/>
</dbReference>
<dbReference type="FunCoup" id="Q9FMT1">
    <property type="interactions" value="260"/>
</dbReference>
<dbReference type="STRING" id="3702.Q9FMT1"/>
<dbReference type="iPTMnet" id="Q9FMT1"/>
<dbReference type="PaxDb" id="3702-AT5G14200.1"/>
<dbReference type="EnsemblPlants" id="AT5G14200.1">
    <molecule id="Q9FMT1-1"/>
    <property type="protein sequence ID" value="AT5G14200.1"/>
    <property type="gene ID" value="AT5G14200"/>
</dbReference>
<dbReference type="GeneID" id="831270"/>
<dbReference type="Gramene" id="AT5G14200.1">
    <molecule id="Q9FMT1-1"/>
    <property type="protein sequence ID" value="AT5G14200.1"/>
    <property type="gene ID" value="AT5G14200"/>
</dbReference>
<dbReference type="KEGG" id="ath:AT5G14200"/>
<dbReference type="Araport" id="AT5G14200"/>
<dbReference type="TAIR" id="AT5G14200">
    <property type="gene designation" value="IMD1"/>
</dbReference>
<dbReference type="eggNOG" id="KOG0786">
    <property type="taxonomic scope" value="Eukaryota"/>
</dbReference>
<dbReference type="InParanoid" id="Q9FMT1"/>
<dbReference type="OrthoDB" id="419183at2759"/>
<dbReference type="PhylomeDB" id="Q9FMT1"/>
<dbReference type="BioCyc" id="ARA:AT5G14200-MONOMER"/>
<dbReference type="BioCyc" id="MetaCyc:AT5G14200-MONOMER"/>
<dbReference type="BRENDA" id="1.1.1.85">
    <property type="organism ID" value="399"/>
</dbReference>
<dbReference type="UniPathway" id="UPA00048">
    <property type="reaction ID" value="UER00072"/>
</dbReference>
<dbReference type="PRO" id="PR:Q9FMT1"/>
<dbReference type="Proteomes" id="UP000006548">
    <property type="component" value="Chromosome 5"/>
</dbReference>
<dbReference type="ExpressionAtlas" id="Q9FMT1">
    <property type="expression patterns" value="baseline and differential"/>
</dbReference>
<dbReference type="GO" id="GO:0009507">
    <property type="term" value="C:chloroplast"/>
    <property type="evidence" value="ECO:0007005"/>
    <property type="project" value="TAIR"/>
</dbReference>
<dbReference type="GO" id="GO:0009570">
    <property type="term" value="C:chloroplast stroma"/>
    <property type="evidence" value="ECO:0000314"/>
    <property type="project" value="UniProtKB"/>
</dbReference>
<dbReference type="GO" id="GO:0005829">
    <property type="term" value="C:cytosol"/>
    <property type="evidence" value="ECO:0007005"/>
    <property type="project" value="TAIR"/>
</dbReference>
<dbReference type="GO" id="GO:0009536">
    <property type="term" value="C:plastid"/>
    <property type="evidence" value="ECO:0000250"/>
    <property type="project" value="TAIR"/>
</dbReference>
<dbReference type="GO" id="GO:0003862">
    <property type="term" value="F:3-isopropylmalate dehydrogenase activity"/>
    <property type="evidence" value="ECO:0000314"/>
    <property type="project" value="UniProtKB"/>
</dbReference>
<dbReference type="GO" id="GO:0000287">
    <property type="term" value="F:magnesium ion binding"/>
    <property type="evidence" value="ECO:0007669"/>
    <property type="project" value="InterPro"/>
</dbReference>
<dbReference type="GO" id="GO:0051287">
    <property type="term" value="F:NAD binding"/>
    <property type="evidence" value="ECO:0007669"/>
    <property type="project" value="InterPro"/>
</dbReference>
<dbReference type="GO" id="GO:0009553">
    <property type="term" value="P:embryo sac development"/>
    <property type="evidence" value="ECO:0000315"/>
    <property type="project" value="UniProtKB"/>
</dbReference>
<dbReference type="GO" id="GO:0019761">
    <property type="term" value="P:glucosinolate biosynthetic process"/>
    <property type="evidence" value="ECO:0000315"/>
    <property type="project" value="UniProtKB"/>
</dbReference>
<dbReference type="GO" id="GO:0009098">
    <property type="term" value="P:L-leucine biosynthetic process"/>
    <property type="evidence" value="ECO:0000314"/>
    <property type="project" value="UniProtKB"/>
</dbReference>
<dbReference type="GO" id="GO:0009555">
    <property type="term" value="P:pollen development"/>
    <property type="evidence" value="ECO:0000315"/>
    <property type="project" value="UniProtKB"/>
</dbReference>
<dbReference type="GO" id="GO:0009753">
    <property type="term" value="P:response to jasmonic acid"/>
    <property type="evidence" value="ECO:0000270"/>
    <property type="project" value="UniProtKB"/>
</dbReference>
<dbReference type="GO" id="GO:0009611">
    <property type="term" value="P:response to wounding"/>
    <property type="evidence" value="ECO:0000270"/>
    <property type="project" value="UniProtKB"/>
</dbReference>
<dbReference type="FunFam" id="3.40.718.10:FF:000004">
    <property type="entry name" value="3-isopropylmalate dehydrogenase"/>
    <property type="match status" value="1"/>
</dbReference>
<dbReference type="Gene3D" id="3.40.718.10">
    <property type="entry name" value="Isopropylmalate Dehydrogenase"/>
    <property type="match status" value="1"/>
</dbReference>
<dbReference type="HAMAP" id="MF_01033">
    <property type="entry name" value="LeuB_type1"/>
    <property type="match status" value="1"/>
</dbReference>
<dbReference type="InterPro" id="IPR019818">
    <property type="entry name" value="IsoCit/isopropylmalate_DH_CS"/>
</dbReference>
<dbReference type="InterPro" id="IPR024084">
    <property type="entry name" value="IsoPropMal-DH-like_dom"/>
</dbReference>
<dbReference type="InterPro" id="IPR004429">
    <property type="entry name" value="Isopropylmalate_DH"/>
</dbReference>
<dbReference type="NCBIfam" id="TIGR00169">
    <property type="entry name" value="leuB"/>
    <property type="match status" value="1"/>
</dbReference>
<dbReference type="PANTHER" id="PTHR42979">
    <property type="entry name" value="3-ISOPROPYLMALATE DEHYDROGENASE"/>
    <property type="match status" value="1"/>
</dbReference>
<dbReference type="PANTHER" id="PTHR42979:SF5">
    <property type="entry name" value="3-ISOPROPYLMALATE DEHYDROGENASE 1, CHLOROPLASTIC-RELATED"/>
    <property type="match status" value="1"/>
</dbReference>
<dbReference type="Pfam" id="PF00180">
    <property type="entry name" value="Iso_dh"/>
    <property type="match status" value="1"/>
</dbReference>
<dbReference type="SMART" id="SM01329">
    <property type="entry name" value="Iso_dh"/>
    <property type="match status" value="1"/>
</dbReference>
<dbReference type="SUPFAM" id="SSF53659">
    <property type="entry name" value="Isocitrate/Isopropylmalate dehydrogenase-like"/>
    <property type="match status" value="1"/>
</dbReference>
<dbReference type="PROSITE" id="PS00470">
    <property type="entry name" value="IDH_IMDH"/>
    <property type="match status" value="1"/>
</dbReference>
<proteinExistence type="evidence at protein level"/>
<gene>
    <name evidence="10" type="primary">IMDH1</name>
    <name evidence="11" type="synonym">IMD1</name>
    <name evidence="13" type="synonym">IPMDH1</name>
    <name evidence="11" type="synonym">MAM-D1</name>
    <name evidence="15" type="ordered locus">At5g14200</name>
    <name evidence="16" type="ORF">MUA22.20</name>
</gene>
<protein>
    <recommendedName>
        <fullName evidence="10">3-isopropylmalate dehydrogenase 1, chloroplastic</fullName>
        <shortName evidence="10">3-IPM-DH 1</shortName>
        <shortName evidence="10 12">AtIMDH1</shortName>
        <shortName evidence="10">IMDH 1</shortName>
        <ecNumber evidence="5 7 8">1.1.1.85</ecNumber>
    </recommendedName>
    <alternativeName>
        <fullName evidence="10">Beta-IPM dehydrogenase 1</fullName>
    </alternativeName>
    <alternativeName>
        <fullName evidence="11">Isopropylmalate dehydrogenase 1</fullName>
        <shortName evidence="11">AtIMD1</shortName>
    </alternativeName>
    <alternativeName>
        <fullName evidence="11">Methylthioalkylmalate dehydrogenase 1</fullName>
    </alternativeName>
</protein>
<evidence type="ECO:0000250" key="1">
    <source>
        <dbReference type="UniProtKB" id="P12010"/>
    </source>
</evidence>
<evidence type="ECO:0000250" key="2">
    <source>
        <dbReference type="UniProtKB" id="P50455"/>
    </source>
</evidence>
<evidence type="ECO:0000250" key="3">
    <source>
        <dbReference type="UniProtKB" id="P93832"/>
    </source>
</evidence>
<evidence type="ECO:0000255" key="4"/>
<evidence type="ECO:0000269" key="5">
    <source>
    </source>
</evidence>
<evidence type="ECO:0000269" key="6">
    <source>
    </source>
</evidence>
<evidence type="ECO:0000269" key="7">
    <source>
    </source>
</evidence>
<evidence type="ECO:0000269" key="8">
    <source>
    </source>
</evidence>
<evidence type="ECO:0000269" key="9">
    <source>
    </source>
</evidence>
<evidence type="ECO:0000303" key="10">
    <source>
    </source>
</evidence>
<evidence type="ECO:0000303" key="11">
    <source>
    </source>
</evidence>
<evidence type="ECO:0000303" key="12">
    <source>
    </source>
</evidence>
<evidence type="ECO:0000303" key="13">
    <source>
    </source>
</evidence>
<evidence type="ECO:0000305" key="14"/>
<evidence type="ECO:0000312" key="15">
    <source>
        <dbReference type="Araport" id="AT5G14200"/>
    </source>
</evidence>
<evidence type="ECO:0000312" key="16">
    <source>
        <dbReference type="EMBL" id="BAB08299.1"/>
    </source>
</evidence>
<evidence type="ECO:0007744" key="17">
    <source>
    </source>
</evidence>
<comment type="function">
    <text evidence="5 6 7 8 9">Involved in both glucosinolate and leucine biosynthesis; catalyzes the oxidative decarboxylation step in both leucine biosynthesis (primary metabolism) and methionine chain elongation of glucosinolates (specialized metabolism) (PubMed:19493961, PubMed:19674406, PubMed:21697089). Catalyzes the oxidation of 3-carboxy-2-hydroxy-4-methylpentanoate (3-isopropylmalate, 3-IPM) to 3-carboxy-4-methyl-2-oxopentanoate. The product decarboxylates to 4-methyl-2 oxopentanoate (PubMed:15849421, PubMed:20840499). Required during pollen development and involved in embryo sac development (PubMed:20840499). More active on 3-isopropylmalate and NAD(+) than towards D-malate (PubMed:19674406).</text>
</comment>
<comment type="catalytic activity">
    <reaction evidence="5 7 8">
        <text>(2R,3S)-3-isopropylmalate + NAD(+) = 4-methyl-2-oxopentanoate + CO2 + NADH</text>
        <dbReference type="Rhea" id="RHEA:32271"/>
        <dbReference type="ChEBI" id="CHEBI:16526"/>
        <dbReference type="ChEBI" id="CHEBI:17865"/>
        <dbReference type="ChEBI" id="CHEBI:35121"/>
        <dbReference type="ChEBI" id="CHEBI:57540"/>
        <dbReference type="ChEBI" id="CHEBI:57945"/>
        <dbReference type="EC" id="1.1.1.85"/>
    </reaction>
</comment>
<comment type="cofactor">
    <cofactor evidence="3">
        <name>Mg(2+)</name>
        <dbReference type="ChEBI" id="CHEBI:18420"/>
    </cofactor>
    <cofactor evidence="2">
        <name>Mn(2+)</name>
        <dbReference type="ChEBI" id="CHEBI:29035"/>
    </cofactor>
    <text evidence="2">Binds 1 Mg(2+) or Mn(2+) ion per subunit.</text>
</comment>
<comment type="activity regulation">
    <text evidence="7">Regulated by a thiol-based redox modification; oxidation by CuCl(2) leads to a decreased activity.</text>
</comment>
<comment type="biophysicochemical properties">
    <kinetics>
        <KM evidence="9">45.3 uM for 3-(2'-methylthio)ethylmalate</KM>
        <KM evidence="7 8 9">25.2 uM for 3-isopropylmalate (at pH 7.5 and in reduced form)</KM>
        <KM evidence="7">187.1 uM for NAD(+) (at pH 7.5 and in reduced form)</KM>
        <KM evidence="7">1100 uM for D-malate (at pH 7.5 and in reduced form)</KM>
        <KM evidence="7">68.62 uM for 3-isopropylmalate (at pH 7.5 and in oxidized form)</KM>
        <KM evidence="7">242.1 uM for NAD(+) (at pH 7.5 and in oxidized form)</KM>
        <KM evidence="7">1400 uM for D-malate (at pH 7.5 and in oxidized form)</KM>
        <Vmax evidence="7 8">0.93 umol/min/mg enzyme with 3-isopropylmalate as substrate (at pH 7.5 and in reduced form)</Vmax>
        <Vmax evidence="7">1.01 umol/min/mg enzyme with NAD(+) as substrate (at pH 7.5 and in reduced form)</Vmax>
        <Vmax evidence="7">0.16 umol/min/mg enzyme with D-malate as substrate (at pH 7.5 and in reduced form)</Vmax>
        <Vmax evidence="7">0.45 umol/min/mg enzyme with 3-isopropylmalate as substrate (at pH 7.5 and in oxidized form)</Vmax>
        <Vmax evidence="7">0.82 umol/min/mg enzyme with NAD(+) as substrate (at pH 7.5 and in oxidized form)</Vmax>
        <Vmax evidence="7">0.11 umol/min/mg enzyme with D-malate as substrate (at pH 7.5 and in oxidized form)</Vmax>
        <text evidence="8 9">kcat is 37 min(-1) with 3-isopropylmalate as substrate (PubMed:20840499, PubMed:21697089). kcat is 51 min(-1) with 3-(2'-methylthio)ethylmalate as substrate (PubMed:21697089).</text>
    </kinetics>
    <phDependence>
        <text evidence="7">Optimum pH is 7.6.</text>
    </phDependence>
    <temperatureDependence>
        <text evidence="7">Optimum temperature is 60 degrees Celsius.</text>
    </temperatureDependence>
</comment>
<comment type="pathway">
    <text evidence="5 7 8">Amino-acid biosynthesis; L-leucine biosynthesis; L-leucine from 3-methyl-2-oxobutanoate: step 3/4.</text>
</comment>
<comment type="pathway">
    <text evidence="6 7">Secondary metabolite biosynthesis.</text>
</comment>
<comment type="subunit">
    <text evidence="1">Homodimer.</text>
</comment>
<comment type="subcellular location">
    <subcellularLocation>
        <location evidence="7">Plastid</location>
        <location evidence="7">Chloroplast stroma</location>
    </subcellularLocation>
</comment>
<comment type="alternative products">
    <event type="alternative splicing"/>
    <isoform>
        <id>Q9FMT1-1</id>
        <name>1</name>
        <sequence type="displayed"/>
    </isoform>
    <text>A number of isoforms are produced. According to EST sequences.</text>
</comment>
<comment type="tissue specificity">
    <text evidence="5 7 8 9">Highly expressed in seedlings, leaves, stems and roots and, to a lower extent, in flowers, pollen and siliques.</text>
</comment>
<comment type="developmental stage">
    <text evidence="7">In young seedlings, expressed in all tissues except in the root tip. Later accumulates in cotyledons, newly emerging leaves and the lower region of roots. In rosettes, predominantly observed in the main veins of leaves. In flowers, present in petals, pistils and in the ends of young siliques.</text>
</comment>
<comment type="induction">
    <text evidence="7">By wounding and jasmonic acid (MeJA).</text>
</comment>
<comment type="disruption phenotype">
    <text evidence="6 7 8 9">No discernible vegetative or reproductive phenotypes except a slight reduction of both male and female transmission efficiency, but decreased leucine biosynthetic enzyme activities and lower free leucine concentrations (PubMed:19674406, PubMed:20840499). The double mutant ipmdh2 ipmdh3 is lethal in male gametophytes (small aborted pollen grains abnormal in cellular structure, and arrested in germination) and had reduced transmission through female gametophytes (slow embryo sacs development) (PubMed:20840499). In atimd1-1 and atipmdh1 mutants, reduced levels of methionine-derived glucosinolates (Met-GSLs) with long chains (C7-C8) and, to some extent, with short chains (C4-C6) (PubMed:19493961, PubMed:19674406, PubMed:21697089). Altered glucosinolate profile is restored by constructs expressing IPMDH2-L134F or IPMDH3-L133F mutants (PubMed:21697089).</text>
</comment>
<comment type="similarity">
    <text evidence="14">Belongs to the isocitrate and isopropylmalate dehydrogenases family.</text>
</comment>
<feature type="transit peptide" description="Chloroplast" evidence="4">
    <location>
        <begin position="1"/>
        <end position="37"/>
    </location>
</feature>
<feature type="chain" id="PRO_0000014455" description="3-isopropylmalate dehydrogenase 1, chloroplastic">
    <location>
        <begin position="38"/>
        <end position="409"/>
    </location>
</feature>
<feature type="binding site" evidence="3">
    <location>
        <begin position="118"/>
        <end position="133"/>
    </location>
    <ligand>
        <name>NAD(+)</name>
        <dbReference type="ChEBI" id="CHEBI:57540"/>
    </ligand>
</feature>
<feature type="binding site" evidence="3">
    <location>
        <position position="140"/>
    </location>
    <ligand>
        <name>substrate</name>
    </ligand>
</feature>
<feature type="binding site" evidence="3">
    <location>
        <position position="150"/>
    </location>
    <ligand>
        <name>substrate</name>
    </ligand>
</feature>
<feature type="binding site" evidence="3">
    <location>
        <position position="178"/>
    </location>
    <ligand>
        <name>substrate</name>
    </ligand>
</feature>
<feature type="binding site" evidence="3">
    <location>
        <position position="238"/>
    </location>
    <ligand>
        <name>NAD(+)</name>
        <dbReference type="ChEBI" id="CHEBI:57540"/>
    </ligand>
</feature>
<feature type="binding site" evidence="3">
    <location>
        <position position="268"/>
    </location>
    <ligand>
        <name>Mg(2+)</name>
        <dbReference type="ChEBI" id="CHEBI:18420"/>
    </ligand>
</feature>
<feature type="binding site" evidence="3">
    <location>
        <position position="268"/>
    </location>
    <ligand>
        <name>substrate</name>
    </ligand>
</feature>
<feature type="binding site" evidence="3">
    <location>
        <position position="269"/>
    </location>
    <ligand>
        <name>NAD(+)</name>
        <dbReference type="ChEBI" id="CHEBI:57540"/>
    </ligand>
</feature>
<feature type="binding site" evidence="3">
    <location>
        <position position="292"/>
    </location>
    <ligand>
        <name>Mg(2+)</name>
        <dbReference type="ChEBI" id="CHEBI:18420"/>
    </ligand>
</feature>
<feature type="binding site" evidence="3">
    <location>
        <position position="296"/>
    </location>
    <ligand>
        <name>Mg(2+)</name>
        <dbReference type="ChEBI" id="CHEBI:18420"/>
    </ligand>
</feature>
<feature type="binding site" evidence="3">
    <location>
        <begin position="322"/>
        <end position="338"/>
    </location>
    <ligand>
        <name>NAD(+)</name>
        <dbReference type="ChEBI" id="CHEBI:57540"/>
    </ligand>
</feature>
<feature type="site" description="Confers substrate specificity" evidence="9">
    <location>
        <position position="137"/>
    </location>
</feature>
<feature type="site" description="Important for catalysis" evidence="3">
    <location>
        <position position="185"/>
    </location>
</feature>
<feature type="site" description="Essential for redox regulation" evidence="7">
    <location>
        <position position="232"/>
    </location>
</feature>
<feature type="site" description="Important for catalysis" evidence="3">
    <location>
        <position position="236"/>
    </location>
</feature>
<feature type="site" description="Essential for redox regulation" evidence="7">
    <location>
        <position position="390"/>
    </location>
</feature>
<feature type="modified residue" description="Phosphoserine" evidence="17">
    <location>
        <position position="74"/>
    </location>
</feature>
<feature type="mutagenesis site" description="Reduced activity toward 3-(2'-methylthio)-ethylmalate, but enhanced catalytic efficiency with 3-isopropylmalate." evidence="9">
    <original>F</original>
    <variation>L</variation>
    <location>
        <position position="137"/>
    </location>
</feature>
<feature type="mutagenesis site" description="Reduced sensitivity to oxidation on enzyme activity regulation." evidence="7">
    <original>C</original>
    <variation>S</variation>
    <location>
        <position position="232"/>
    </location>
</feature>
<feature type="mutagenesis site" description="Reduced sensitivity to oxidation on enzyme activity regulation." evidence="7">
    <original>C</original>
    <variation>S</variation>
    <location>
        <position position="390"/>
    </location>
</feature>
<feature type="sequence conflict" description="In Ref. 4; AAL67125." evidence="14" ref="4">
    <original>T</original>
    <variation>A</variation>
    <location>
        <position position="251"/>
    </location>
</feature>
<organism>
    <name type="scientific">Arabidopsis thaliana</name>
    <name type="common">Mouse-ear cress</name>
    <dbReference type="NCBI Taxonomy" id="3702"/>
    <lineage>
        <taxon>Eukaryota</taxon>
        <taxon>Viridiplantae</taxon>
        <taxon>Streptophyta</taxon>
        <taxon>Embryophyta</taxon>
        <taxon>Tracheophyta</taxon>
        <taxon>Spermatophyta</taxon>
        <taxon>Magnoliopsida</taxon>
        <taxon>eudicotyledons</taxon>
        <taxon>Gunneridae</taxon>
        <taxon>Pentapetalae</taxon>
        <taxon>rosids</taxon>
        <taxon>malvids</taxon>
        <taxon>Brassicales</taxon>
        <taxon>Brassicaceae</taxon>
        <taxon>Camelineae</taxon>
        <taxon>Arabidopsis</taxon>
    </lineage>
</organism>
<name>LEU31_ARATH</name>
<keyword id="KW-0025">Alternative splicing</keyword>
<keyword id="KW-0028">Amino-acid biosynthesis</keyword>
<keyword id="KW-0100">Branched-chain amino acid biosynthesis</keyword>
<keyword id="KW-0150">Chloroplast</keyword>
<keyword id="KW-0432">Leucine biosynthesis</keyword>
<keyword id="KW-0460">Magnesium</keyword>
<keyword id="KW-0464">Manganese</keyword>
<keyword id="KW-0479">Metal-binding</keyword>
<keyword id="KW-0520">NAD</keyword>
<keyword id="KW-0560">Oxidoreductase</keyword>
<keyword id="KW-0597">Phosphoprotein</keyword>
<keyword id="KW-0934">Plastid</keyword>
<keyword id="KW-1185">Reference proteome</keyword>
<keyword id="KW-0809">Transit peptide</keyword>
<accession>Q9FMT1</accession>
<accession>Q8VXU4</accession>
<sequence>MAAFLQTNISLNAIKIVPGKYSSLTDHQFRAPYRIRCAAASPGKKRYNIALLPGDGIGPEVISVAKNVLQKAGSLEGLEFDFKEMPVGGAALDLVGVPLPEETFTAAKLSDAILLGAIGGYKWDKNEKHLRPEMALFYLRRDLKVFANLRPATVLPQLVDASTLKKEVAEGVDMMIVRELTGGIYFGEPRGITINENGEEVGVSTEIYAAHEIDRIARVAFETARKRRGKLCSVDKANVLDASILWRKRVTALASEYPDVELSHMYVDNAAMQLIRDPKQFDTIVTNNIFGDILSDEASMITGSIGMLPSASLGESGPGLFEPIHGSAPDIAGQDKANPLATILSAAMLLKYGLGEEKAAKRIEDAVVDALNKGFRTGDIYSPGNKLVGCKEMGEEVLKSVESKVPATV</sequence>
<reference key="1">
    <citation type="journal article" date="2005" name="Biosci. Biotechnol. Biochem.">
        <title>Cloning of cDNAs encoding isopropylmalate dehydrogenase from Arabidopsis thaliana and accumulation patterns of their transcripts.</title>
        <authorList>
            <person name="Nozawa A."/>
            <person name="Takano J."/>
            <person name="Miwa K."/>
            <person name="Nakagawa Y."/>
            <person name="Fujiwara T."/>
        </authorList>
    </citation>
    <scope>NUCLEOTIDE SEQUENCE [MRNA]</scope>
    <scope>FUNCTION</scope>
    <scope>CATALYTIC ACTIVITY</scope>
    <scope>PATHWAY</scope>
    <scope>TISSUE SPECIFICITY</scope>
    <scope>GENE FAMILY</scope>
    <scope>NOMENCLATURE</scope>
    <source>
        <strain>cv. Columbia</strain>
    </source>
</reference>
<reference key="2">
    <citation type="journal article" date="1997" name="DNA Res.">
        <title>Structural analysis of Arabidopsis thaliana chromosome 5. III. Sequence features of the regions of 1,191,918 bp covered by seventeen physically assigned P1 clones.</title>
        <authorList>
            <person name="Nakamura Y."/>
            <person name="Sato S."/>
            <person name="Kaneko T."/>
            <person name="Kotani H."/>
            <person name="Asamizu E."/>
            <person name="Miyajima N."/>
            <person name="Tabata S."/>
        </authorList>
    </citation>
    <scope>NUCLEOTIDE SEQUENCE [LARGE SCALE GENOMIC DNA]</scope>
    <source>
        <strain>cv. Columbia</strain>
    </source>
</reference>
<reference key="3">
    <citation type="journal article" date="2017" name="Plant J.">
        <title>Araport11: a complete reannotation of the Arabidopsis thaliana reference genome.</title>
        <authorList>
            <person name="Cheng C.Y."/>
            <person name="Krishnakumar V."/>
            <person name="Chan A.P."/>
            <person name="Thibaud-Nissen F."/>
            <person name="Schobel S."/>
            <person name="Town C.D."/>
        </authorList>
    </citation>
    <scope>GENOME REANNOTATION</scope>
    <source>
        <strain>cv. Columbia</strain>
    </source>
</reference>
<reference key="4">
    <citation type="journal article" date="2003" name="Science">
        <title>Empirical analysis of transcriptional activity in the Arabidopsis genome.</title>
        <authorList>
            <person name="Yamada K."/>
            <person name="Lim J."/>
            <person name="Dale J.M."/>
            <person name="Chen H."/>
            <person name="Shinn P."/>
            <person name="Palm C.J."/>
            <person name="Southwick A.M."/>
            <person name="Wu H.C."/>
            <person name="Kim C.J."/>
            <person name="Nguyen M."/>
            <person name="Pham P.K."/>
            <person name="Cheuk R.F."/>
            <person name="Karlin-Newmann G."/>
            <person name="Liu S.X."/>
            <person name="Lam B."/>
            <person name="Sakano H."/>
            <person name="Wu T."/>
            <person name="Yu G."/>
            <person name="Miranda M."/>
            <person name="Quach H.L."/>
            <person name="Tripp M."/>
            <person name="Chang C.H."/>
            <person name="Lee J.M."/>
            <person name="Toriumi M.J."/>
            <person name="Chan M.M."/>
            <person name="Tang C.C."/>
            <person name="Onodera C.S."/>
            <person name="Deng J.M."/>
            <person name="Akiyama K."/>
            <person name="Ansari Y."/>
            <person name="Arakawa T."/>
            <person name="Banh J."/>
            <person name="Banno F."/>
            <person name="Bowser L."/>
            <person name="Brooks S.Y."/>
            <person name="Carninci P."/>
            <person name="Chao Q."/>
            <person name="Choy N."/>
            <person name="Enju A."/>
            <person name="Goldsmith A.D."/>
            <person name="Gurjal M."/>
            <person name="Hansen N.F."/>
            <person name="Hayashizaki Y."/>
            <person name="Johnson-Hopson C."/>
            <person name="Hsuan V.W."/>
            <person name="Iida K."/>
            <person name="Karnes M."/>
            <person name="Khan S."/>
            <person name="Koesema E."/>
            <person name="Ishida J."/>
            <person name="Jiang P.X."/>
            <person name="Jones T."/>
            <person name="Kawai J."/>
            <person name="Kamiya A."/>
            <person name="Meyers C."/>
            <person name="Nakajima M."/>
            <person name="Narusaka M."/>
            <person name="Seki M."/>
            <person name="Sakurai T."/>
            <person name="Satou M."/>
            <person name="Tamse R."/>
            <person name="Vaysberg M."/>
            <person name="Wallender E.K."/>
            <person name="Wong C."/>
            <person name="Yamamura Y."/>
            <person name="Yuan S."/>
            <person name="Shinozaki K."/>
            <person name="Davis R.W."/>
            <person name="Theologis A."/>
            <person name="Ecker J.R."/>
        </authorList>
    </citation>
    <scope>NUCLEOTIDE SEQUENCE [LARGE SCALE MRNA]</scope>
    <source>
        <strain>cv. Columbia</strain>
    </source>
</reference>
<reference key="5">
    <citation type="journal article" date="2009" name="Plant Physiol.">
        <title>Large-scale Arabidopsis phosphoproteome profiling reveals novel chloroplast kinase substrates and phosphorylation networks.</title>
        <authorList>
            <person name="Reiland S."/>
            <person name="Messerli G."/>
            <person name="Baerenfaller K."/>
            <person name="Gerrits B."/>
            <person name="Endler A."/>
            <person name="Grossmann J."/>
            <person name="Gruissem W."/>
            <person name="Baginsky S."/>
        </authorList>
    </citation>
    <scope>PHOSPHORYLATION [LARGE SCALE ANALYSIS] AT SER-74</scope>
    <scope>IDENTIFICATION BY MASS SPECTROMETRY [LARGE SCALE ANALYSIS]</scope>
</reference>
<reference key="6">
    <citation type="journal article" date="2009" name="Plant Cell Physiol.">
        <title>Omics-based approaches to methionine side chain elongation in Arabidopsis: characterization of the genes encoding methylthioalkylmalate isomerase and methylthioalkylmalate dehydrogenase.</title>
        <authorList>
            <person name="Sawada Y."/>
            <person name="Kuwahara A."/>
            <person name="Nagano M."/>
            <person name="Narisawa T."/>
            <person name="Sakata A."/>
            <person name="Saito K."/>
            <person name="Hirai M.Y."/>
        </authorList>
    </citation>
    <scope>FUNCTION</scope>
    <scope>DISRUPTION PHENOTYPE</scope>
    <scope>GENE FAMILY</scope>
    <scope>NOMENCLATURE</scope>
</reference>
<reference key="7">
    <citation type="journal article" date="2009" name="Plant J.">
        <title>A redox-active isopropylmalate dehydrogenase functions in the biosynthesis of glucosinolates and leucine in Arabidopsis.</title>
        <authorList>
            <person name="He Y."/>
            <person name="Mawhinney T.P."/>
            <person name="Preuss M.L."/>
            <person name="Schroeder A.C."/>
            <person name="Chen B."/>
            <person name="Abraham L."/>
            <person name="Jez J.M."/>
            <person name="Chen S."/>
        </authorList>
    </citation>
    <scope>FUNCTION</scope>
    <scope>DISRUPTION PHENOTYPE</scope>
    <scope>MUTAGENESIS OF CYS-232 AND CYS-390</scope>
    <scope>CATALYTIC ACTIVITY</scope>
    <scope>PATHWAY</scope>
    <scope>SUBCELLULAR LOCATION</scope>
    <scope>TISSUE SPECIFICITY</scope>
    <scope>ACTIVITY REGULATION</scope>
    <scope>BIOPHYSICOCHEMICAL PROPERTIES</scope>
    <scope>INDUCTION BY WOUNDING AND JASMONIC ACID</scope>
    <scope>DEVELOPMENTAL STAGE</scope>
    <scope>GENE FAMILY</scope>
    <source>
        <strain>cv. Columbia</strain>
    </source>
</reference>
<reference key="8">
    <citation type="journal article" date="2011" name="J. Biol. Chem.">
        <title>Structural and functional evolution of isopropylmalate dehydrogenases in the leucine and glucosinolate pathways of Arabidopsis thaliana.</title>
        <authorList>
            <person name="He Y."/>
            <person name="Galant A."/>
            <person name="Pang Q."/>
            <person name="Strul J.M."/>
            <person name="Balogun S.F."/>
            <person name="Jez J.M."/>
            <person name="Chen S."/>
        </authorList>
    </citation>
    <scope>FUNCTION</scope>
    <scope>DISRUPTION PHENOTYPE</scope>
    <scope>MUTAGENESIS OF PHE-137</scope>
    <scope>TISSUE SPECIFICITY</scope>
    <scope>BIOPHYSICOCHEMICAL PROPERTIES</scope>
    <source>
        <strain>cv. Columbia</strain>
    </source>
</reference>
<reference key="9">
    <citation type="journal article" date="2011" name="New Phytol.">
        <title>Functional characterization of Arabidopsis thaliana isopropylmalate dehydrogenases reveals their important roles in gametophyte development.</title>
        <authorList>
            <person name="He Y."/>
            <person name="Chen L."/>
            <person name="Zhou Y."/>
            <person name="Mawhinney T.P."/>
            <person name="Chen B."/>
            <person name="Kang B.-H."/>
            <person name="Hauser B.A."/>
            <person name="Chen S."/>
        </authorList>
    </citation>
    <scope>FUNCTION</scope>
    <scope>DISRUPTION PHENOTYPE</scope>
    <scope>BIOPHYSICOCHEMICAL PROPERTIES</scope>
    <scope>CATALYTIC ACTIVITY</scope>
    <scope>PATHWAY</scope>
    <scope>TISSUE SPECIFICITY</scope>
    <source>
        <strain>cv. Columbia</strain>
    </source>
</reference>